<gene>
    <name evidence="1" type="primary">ubiD</name>
    <name type="ordered locus">ETA_02430</name>
</gene>
<keyword id="KW-1003">Cell membrane</keyword>
<keyword id="KW-0210">Decarboxylase</keyword>
<keyword id="KW-0285">Flavoprotein</keyword>
<keyword id="KW-0288">FMN</keyword>
<keyword id="KW-0456">Lyase</keyword>
<keyword id="KW-0464">Manganese</keyword>
<keyword id="KW-0472">Membrane</keyword>
<keyword id="KW-0479">Metal-binding</keyword>
<keyword id="KW-1185">Reference proteome</keyword>
<keyword id="KW-0831">Ubiquinone biosynthesis</keyword>
<feature type="chain" id="PRO_1000186712" description="3-octaprenyl-4-hydroxybenzoate carboxy-lyase">
    <location>
        <begin position="1"/>
        <end position="494"/>
    </location>
</feature>
<feature type="active site" description="Proton donor" evidence="1">
    <location>
        <position position="287"/>
    </location>
</feature>
<feature type="binding site" evidence="1">
    <location>
        <position position="172"/>
    </location>
    <ligand>
        <name>Mn(2+)</name>
        <dbReference type="ChEBI" id="CHEBI:29035"/>
    </ligand>
</feature>
<feature type="binding site" evidence="1">
    <location>
        <begin position="175"/>
        <end position="177"/>
    </location>
    <ligand>
        <name>prenylated FMN</name>
        <dbReference type="ChEBI" id="CHEBI:87746"/>
    </ligand>
</feature>
<feature type="binding site" evidence="1">
    <location>
        <begin position="189"/>
        <end position="191"/>
    </location>
    <ligand>
        <name>prenylated FMN</name>
        <dbReference type="ChEBI" id="CHEBI:87746"/>
    </ligand>
</feature>
<feature type="binding site" evidence="1">
    <location>
        <begin position="194"/>
        <end position="195"/>
    </location>
    <ligand>
        <name>prenylated FMN</name>
        <dbReference type="ChEBI" id="CHEBI:87746"/>
    </ligand>
</feature>
<feature type="binding site" evidence="1">
    <location>
        <position position="238"/>
    </location>
    <ligand>
        <name>Mn(2+)</name>
        <dbReference type="ChEBI" id="CHEBI:29035"/>
    </ligand>
</feature>
<evidence type="ECO:0000255" key="1">
    <source>
        <dbReference type="HAMAP-Rule" id="MF_01636"/>
    </source>
</evidence>
<sequence>MKYHDLRDFISLLEQRGELKRIKQEIDPDLEMTEIADRTLRAGGPALLFENPKGYSMPVLCNLFGTPDRVALGMGQEDVKALRDVGKLLAFLKEPEPPRGFRDFFDKMPQWKQVLNMPTKRLRNAPCQQQIWQGDDVDLTRIPVMKCWPGDAAPLVTWGLTVTRGPSKERQNLGIYRQQVIGKNKLIMRWLSHRGGALDFQEWCQQHPGERFPVSVALGADPATILGAVTPVPDTLSEYAFAGLLRGTKTEVVKCVSNDLEVPASAEIVLEGYIEPGEVAPEGPYGDHTGYYNEVDDFPVFTVTHITQRRDAIYHSTYTGRPPDEPAVLGVALNEVFVPILQKQFPEIVDFYLPPEGCSYRLAVVTIKKQYAGHAKRVMMGVWSFLRQFMYTKFVIVCDDDVNARDWNDVIWAITTRMDPARDTVLVENTPIDYLDFASPVSGLGSKMGMDATNKWPGETQREWGTPIRKDPAVVARIDAIWDELGILSDTPAR</sequence>
<comment type="function">
    <text evidence="1">Catalyzes the decarboxylation of 3-octaprenyl-4-hydroxy benzoate to 2-octaprenylphenol, an intermediate step in ubiquinone biosynthesis.</text>
</comment>
<comment type="catalytic activity">
    <reaction evidence="1">
        <text>a 4-hydroxy-3-(all-trans-polyprenyl)benzoate + H(+) = a 2-(all-trans-polyprenyl)phenol + CO2</text>
        <dbReference type="Rhea" id="RHEA:41680"/>
        <dbReference type="Rhea" id="RHEA-COMP:9514"/>
        <dbReference type="Rhea" id="RHEA-COMP:9516"/>
        <dbReference type="ChEBI" id="CHEBI:1269"/>
        <dbReference type="ChEBI" id="CHEBI:15378"/>
        <dbReference type="ChEBI" id="CHEBI:16526"/>
        <dbReference type="ChEBI" id="CHEBI:78396"/>
        <dbReference type="EC" id="4.1.1.98"/>
    </reaction>
</comment>
<comment type="cofactor">
    <cofactor evidence="1">
        <name>prenylated FMN</name>
        <dbReference type="ChEBI" id="CHEBI:87746"/>
    </cofactor>
    <text evidence="1">Binds 1 prenylated FMN per subunit.</text>
</comment>
<comment type="cofactor">
    <cofactor evidence="1">
        <name>Mn(2+)</name>
        <dbReference type="ChEBI" id="CHEBI:29035"/>
    </cofactor>
</comment>
<comment type="pathway">
    <text evidence="1">Cofactor biosynthesis; ubiquinone biosynthesis.</text>
</comment>
<comment type="subunit">
    <text evidence="1">Homohexamer.</text>
</comment>
<comment type="subcellular location">
    <subcellularLocation>
        <location evidence="1">Cell membrane</location>
        <topology evidence="1">Peripheral membrane protein</topology>
    </subcellularLocation>
</comment>
<comment type="similarity">
    <text evidence="1">Belongs to the UbiD family.</text>
</comment>
<reference key="1">
    <citation type="journal article" date="2008" name="Environ. Microbiol.">
        <title>The genome of Erwinia tasmaniensis strain Et1/99, a non-pathogenic bacterium in the genus Erwinia.</title>
        <authorList>
            <person name="Kube M."/>
            <person name="Migdoll A.M."/>
            <person name="Mueller I."/>
            <person name="Kuhl H."/>
            <person name="Beck A."/>
            <person name="Reinhardt R."/>
            <person name="Geider K."/>
        </authorList>
    </citation>
    <scope>NUCLEOTIDE SEQUENCE [LARGE SCALE GENOMIC DNA]</scope>
    <source>
        <strain>DSM 17950 / CFBP 7177 / CIP 109463 / NCPPB 4357 / Et1/99</strain>
    </source>
</reference>
<dbReference type="EC" id="4.1.1.98" evidence="1"/>
<dbReference type="EMBL" id="CU468135">
    <property type="protein sequence ID" value="CAO95289.1"/>
    <property type="molecule type" value="Genomic_DNA"/>
</dbReference>
<dbReference type="RefSeq" id="WP_012440009.1">
    <property type="nucleotide sequence ID" value="NC_010694.1"/>
</dbReference>
<dbReference type="SMR" id="B2VFE2"/>
<dbReference type="STRING" id="465817.ETA_02430"/>
<dbReference type="KEGG" id="eta:ETA_02430"/>
<dbReference type="eggNOG" id="COG0043">
    <property type="taxonomic scope" value="Bacteria"/>
</dbReference>
<dbReference type="HOGENOM" id="CLU_023348_4_1_6"/>
<dbReference type="OrthoDB" id="9809841at2"/>
<dbReference type="UniPathway" id="UPA00232"/>
<dbReference type="Proteomes" id="UP000001726">
    <property type="component" value="Chromosome"/>
</dbReference>
<dbReference type="GO" id="GO:0005829">
    <property type="term" value="C:cytosol"/>
    <property type="evidence" value="ECO:0007669"/>
    <property type="project" value="TreeGrafter"/>
</dbReference>
<dbReference type="GO" id="GO:0005886">
    <property type="term" value="C:plasma membrane"/>
    <property type="evidence" value="ECO:0007669"/>
    <property type="project" value="UniProtKB-SubCell"/>
</dbReference>
<dbReference type="GO" id="GO:0008694">
    <property type="term" value="F:3-octaprenyl-4-hydroxybenzoate carboxy-lyase activity"/>
    <property type="evidence" value="ECO:0007669"/>
    <property type="project" value="UniProtKB-UniRule"/>
</dbReference>
<dbReference type="GO" id="GO:0046872">
    <property type="term" value="F:metal ion binding"/>
    <property type="evidence" value="ECO:0007669"/>
    <property type="project" value="UniProtKB-KW"/>
</dbReference>
<dbReference type="GO" id="GO:0006744">
    <property type="term" value="P:ubiquinone biosynthetic process"/>
    <property type="evidence" value="ECO:0007669"/>
    <property type="project" value="UniProtKB-UniRule"/>
</dbReference>
<dbReference type="FunFam" id="1.20.5.570:FF:000001">
    <property type="entry name" value="3-octaprenyl-4-hydroxybenzoate carboxy-lyase"/>
    <property type="match status" value="1"/>
</dbReference>
<dbReference type="FunFam" id="3.40.1670.10:FF:000001">
    <property type="entry name" value="3-octaprenyl-4-hydroxybenzoate carboxy-lyase"/>
    <property type="match status" value="1"/>
</dbReference>
<dbReference type="Gene3D" id="1.20.5.570">
    <property type="entry name" value="Single helix bin"/>
    <property type="match status" value="1"/>
</dbReference>
<dbReference type="Gene3D" id="3.40.1670.10">
    <property type="entry name" value="UbiD C-terminal domain-like"/>
    <property type="match status" value="1"/>
</dbReference>
<dbReference type="HAMAP" id="MF_01636">
    <property type="entry name" value="UbiD"/>
    <property type="match status" value="1"/>
</dbReference>
<dbReference type="InterPro" id="IPR002830">
    <property type="entry name" value="UbiD"/>
</dbReference>
<dbReference type="InterPro" id="IPR049381">
    <property type="entry name" value="UbiD-like_C"/>
</dbReference>
<dbReference type="InterPro" id="IPR049383">
    <property type="entry name" value="UbiD-like_N"/>
</dbReference>
<dbReference type="InterPro" id="IPR023677">
    <property type="entry name" value="UbiD_bacteria"/>
</dbReference>
<dbReference type="InterPro" id="IPR048304">
    <property type="entry name" value="UbiD_Rift_dom"/>
</dbReference>
<dbReference type="NCBIfam" id="NF008175">
    <property type="entry name" value="PRK10922.1"/>
    <property type="match status" value="1"/>
</dbReference>
<dbReference type="NCBIfam" id="TIGR00148">
    <property type="entry name" value="UbiD family decarboxylase"/>
    <property type="match status" value="1"/>
</dbReference>
<dbReference type="PANTHER" id="PTHR30108">
    <property type="entry name" value="3-OCTAPRENYL-4-HYDROXYBENZOATE CARBOXY-LYASE-RELATED"/>
    <property type="match status" value="1"/>
</dbReference>
<dbReference type="PANTHER" id="PTHR30108:SF17">
    <property type="entry name" value="FERULIC ACID DECARBOXYLASE 1"/>
    <property type="match status" value="1"/>
</dbReference>
<dbReference type="Pfam" id="PF01977">
    <property type="entry name" value="UbiD"/>
    <property type="match status" value="1"/>
</dbReference>
<dbReference type="Pfam" id="PF20696">
    <property type="entry name" value="UbiD_C"/>
    <property type="match status" value="1"/>
</dbReference>
<dbReference type="Pfam" id="PF20695">
    <property type="entry name" value="UbiD_N"/>
    <property type="match status" value="1"/>
</dbReference>
<dbReference type="SUPFAM" id="SSF50475">
    <property type="entry name" value="FMN-binding split barrel"/>
    <property type="match status" value="1"/>
</dbReference>
<dbReference type="SUPFAM" id="SSF143968">
    <property type="entry name" value="UbiD C-terminal domain-like"/>
    <property type="match status" value="1"/>
</dbReference>
<proteinExistence type="inferred from homology"/>
<name>UBID_ERWT9</name>
<protein>
    <recommendedName>
        <fullName evidence="1">3-octaprenyl-4-hydroxybenzoate carboxy-lyase</fullName>
        <ecNumber evidence="1">4.1.1.98</ecNumber>
    </recommendedName>
    <alternativeName>
        <fullName evidence="1">Polyprenyl p-hydroxybenzoate decarboxylase</fullName>
    </alternativeName>
</protein>
<organism>
    <name type="scientific">Erwinia tasmaniensis (strain DSM 17950 / CFBP 7177 / CIP 109463 / NCPPB 4357 / Et1/99)</name>
    <dbReference type="NCBI Taxonomy" id="465817"/>
    <lineage>
        <taxon>Bacteria</taxon>
        <taxon>Pseudomonadati</taxon>
        <taxon>Pseudomonadota</taxon>
        <taxon>Gammaproteobacteria</taxon>
        <taxon>Enterobacterales</taxon>
        <taxon>Erwiniaceae</taxon>
        <taxon>Erwinia</taxon>
    </lineage>
</organism>
<accession>B2VFE2</accession>